<dbReference type="EC" id="2.7.2.3" evidence="1"/>
<dbReference type="EMBL" id="CP001157">
    <property type="protein sequence ID" value="ACO76812.1"/>
    <property type="molecule type" value="Genomic_DNA"/>
</dbReference>
<dbReference type="RefSeq" id="WP_012699240.1">
    <property type="nucleotide sequence ID" value="NC_012560.1"/>
</dbReference>
<dbReference type="SMR" id="C1DKE9"/>
<dbReference type="STRING" id="322710.Avin_05590"/>
<dbReference type="EnsemblBacteria" id="ACO76812">
    <property type="protein sequence ID" value="ACO76812"/>
    <property type="gene ID" value="Avin_05590"/>
</dbReference>
<dbReference type="GeneID" id="88183974"/>
<dbReference type="KEGG" id="avn:Avin_05590"/>
<dbReference type="eggNOG" id="COG0126">
    <property type="taxonomic scope" value="Bacteria"/>
</dbReference>
<dbReference type="HOGENOM" id="CLU_025427_0_2_6"/>
<dbReference type="OrthoDB" id="9808460at2"/>
<dbReference type="UniPathway" id="UPA00109">
    <property type="reaction ID" value="UER00185"/>
</dbReference>
<dbReference type="Proteomes" id="UP000002424">
    <property type="component" value="Chromosome"/>
</dbReference>
<dbReference type="GO" id="GO:0005829">
    <property type="term" value="C:cytosol"/>
    <property type="evidence" value="ECO:0007669"/>
    <property type="project" value="TreeGrafter"/>
</dbReference>
<dbReference type="GO" id="GO:0043531">
    <property type="term" value="F:ADP binding"/>
    <property type="evidence" value="ECO:0007669"/>
    <property type="project" value="TreeGrafter"/>
</dbReference>
<dbReference type="GO" id="GO:0005524">
    <property type="term" value="F:ATP binding"/>
    <property type="evidence" value="ECO:0007669"/>
    <property type="project" value="UniProtKB-KW"/>
</dbReference>
<dbReference type="GO" id="GO:0004618">
    <property type="term" value="F:phosphoglycerate kinase activity"/>
    <property type="evidence" value="ECO:0007669"/>
    <property type="project" value="UniProtKB-UniRule"/>
</dbReference>
<dbReference type="GO" id="GO:0006094">
    <property type="term" value="P:gluconeogenesis"/>
    <property type="evidence" value="ECO:0007669"/>
    <property type="project" value="TreeGrafter"/>
</dbReference>
<dbReference type="GO" id="GO:0006096">
    <property type="term" value="P:glycolytic process"/>
    <property type="evidence" value="ECO:0007669"/>
    <property type="project" value="UniProtKB-UniRule"/>
</dbReference>
<dbReference type="FunFam" id="3.40.50.1260:FF:000001">
    <property type="entry name" value="Phosphoglycerate kinase"/>
    <property type="match status" value="1"/>
</dbReference>
<dbReference type="FunFam" id="3.40.50.1260:FF:000002">
    <property type="entry name" value="Phosphoglycerate kinase"/>
    <property type="match status" value="1"/>
</dbReference>
<dbReference type="Gene3D" id="3.40.50.1260">
    <property type="entry name" value="Phosphoglycerate kinase, N-terminal domain"/>
    <property type="match status" value="2"/>
</dbReference>
<dbReference type="HAMAP" id="MF_00145">
    <property type="entry name" value="Phosphoglyc_kinase"/>
    <property type="match status" value="1"/>
</dbReference>
<dbReference type="InterPro" id="IPR001576">
    <property type="entry name" value="Phosphoglycerate_kinase"/>
</dbReference>
<dbReference type="InterPro" id="IPR015911">
    <property type="entry name" value="Phosphoglycerate_kinase_CS"/>
</dbReference>
<dbReference type="InterPro" id="IPR015824">
    <property type="entry name" value="Phosphoglycerate_kinase_N"/>
</dbReference>
<dbReference type="InterPro" id="IPR036043">
    <property type="entry name" value="Phosphoglycerate_kinase_sf"/>
</dbReference>
<dbReference type="PANTHER" id="PTHR11406">
    <property type="entry name" value="PHOSPHOGLYCERATE KINASE"/>
    <property type="match status" value="1"/>
</dbReference>
<dbReference type="PANTHER" id="PTHR11406:SF23">
    <property type="entry name" value="PHOSPHOGLYCERATE KINASE 1, CHLOROPLASTIC-RELATED"/>
    <property type="match status" value="1"/>
</dbReference>
<dbReference type="Pfam" id="PF00162">
    <property type="entry name" value="PGK"/>
    <property type="match status" value="1"/>
</dbReference>
<dbReference type="PIRSF" id="PIRSF000724">
    <property type="entry name" value="Pgk"/>
    <property type="match status" value="1"/>
</dbReference>
<dbReference type="PRINTS" id="PR00477">
    <property type="entry name" value="PHGLYCKINASE"/>
</dbReference>
<dbReference type="SUPFAM" id="SSF53748">
    <property type="entry name" value="Phosphoglycerate kinase"/>
    <property type="match status" value="1"/>
</dbReference>
<dbReference type="PROSITE" id="PS00111">
    <property type="entry name" value="PGLYCERATE_KINASE"/>
    <property type="match status" value="1"/>
</dbReference>
<gene>
    <name evidence="1" type="primary">pgk</name>
    <name type="ordered locus">Avin_05590</name>
</gene>
<organism>
    <name type="scientific">Azotobacter vinelandii (strain DJ / ATCC BAA-1303)</name>
    <dbReference type="NCBI Taxonomy" id="322710"/>
    <lineage>
        <taxon>Bacteria</taxon>
        <taxon>Pseudomonadati</taxon>
        <taxon>Pseudomonadota</taxon>
        <taxon>Gammaproteobacteria</taxon>
        <taxon>Pseudomonadales</taxon>
        <taxon>Pseudomonadaceae</taxon>
        <taxon>Azotobacter</taxon>
    </lineage>
</organism>
<proteinExistence type="inferred from homology"/>
<evidence type="ECO:0000255" key="1">
    <source>
        <dbReference type="HAMAP-Rule" id="MF_00145"/>
    </source>
</evidence>
<feature type="chain" id="PRO_1000203319" description="Phosphoglycerate kinase">
    <location>
        <begin position="1"/>
        <end position="386"/>
    </location>
</feature>
<feature type="binding site" evidence="1">
    <location>
        <begin position="21"/>
        <end position="23"/>
    </location>
    <ligand>
        <name>substrate</name>
    </ligand>
</feature>
<feature type="binding site" evidence="1">
    <location>
        <position position="36"/>
    </location>
    <ligand>
        <name>substrate</name>
    </ligand>
</feature>
<feature type="binding site" evidence="1">
    <location>
        <begin position="59"/>
        <end position="62"/>
    </location>
    <ligand>
        <name>substrate</name>
    </ligand>
</feature>
<feature type="binding site" evidence="1">
    <location>
        <position position="113"/>
    </location>
    <ligand>
        <name>substrate</name>
    </ligand>
</feature>
<feature type="binding site" evidence="1">
    <location>
        <position position="146"/>
    </location>
    <ligand>
        <name>substrate</name>
    </ligand>
</feature>
<feature type="binding site" evidence="1">
    <location>
        <position position="197"/>
    </location>
    <ligand>
        <name>ATP</name>
        <dbReference type="ChEBI" id="CHEBI:30616"/>
    </ligand>
</feature>
<feature type="binding site" evidence="1">
    <location>
        <position position="314"/>
    </location>
    <ligand>
        <name>ATP</name>
        <dbReference type="ChEBI" id="CHEBI:30616"/>
    </ligand>
</feature>
<feature type="binding site" evidence="1">
    <location>
        <begin position="340"/>
        <end position="343"/>
    </location>
    <ligand>
        <name>ATP</name>
        <dbReference type="ChEBI" id="CHEBI:30616"/>
    </ligand>
</feature>
<sequence>MTVLKMTDLDLKGKRVLIREDLNVPVKDGVVKSDARILASLPTIKLALEKGAAVMVCSHLGRPTEGEYSEENSLKPVADYLSGALGREVPLLGEYLDGVKVEPGQVVLFENVRFNKGEKKNADELAQRYAALCDVFVMDAFGTAHRAEGSTHGVARFAKVACAGPLLAAELEALGKALDNPQRPMAAIVAGSKVSTKLDVLNSLSQVCDQLIVGGGIANTFLAAAGYKVGKSLYEADLVDTAKAIAAKVSVPLPVDVVVAKAFAESAEATVKAIDEVADDDMILDIGPQTAAQFAELLKSSRTILWNGPVGVFEFDQFGNGTKVLAEAIAASPAFSIAGGGDTLAAIDKYGVGEKISYISTGGGAFLEFVEGKVLPAVAVLEERAR</sequence>
<comment type="catalytic activity">
    <reaction evidence="1">
        <text>(2R)-3-phosphoglycerate + ATP = (2R)-3-phospho-glyceroyl phosphate + ADP</text>
        <dbReference type="Rhea" id="RHEA:14801"/>
        <dbReference type="ChEBI" id="CHEBI:30616"/>
        <dbReference type="ChEBI" id="CHEBI:57604"/>
        <dbReference type="ChEBI" id="CHEBI:58272"/>
        <dbReference type="ChEBI" id="CHEBI:456216"/>
        <dbReference type="EC" id="2.7.2.3"/>
    </reaction>
</comment>
<comment type="pathway">
    <text evidence="1">Carbohydrate degradation; glycolysis; pyruvate from D-glyceraldehyde 3-phosphate: step 2/5.</text>
</comment>
<comment type="subunit">
    <text evidence="1">Monomer.</text>
</comment>
<comment type="subcellular location">
    <subcellularLocation>
        <location evidence="1">Cytoplasm</location>
    </subcellularLocation>
</comment>
<comment type="similarity">
    <text evidence="1">Belongs to the phosphoglycerate kinase family.</text>
</comment>
<reference key="1">
    <citation type="journal article" date="2009" name="J. Bacteriol.">
        <title>Genome sequence of Azotobacter vinelandii, an obligate aerobe specialized to support diverse anaerobic metabolic processes.</title>
        <authorList>
            <person name="Setubal J.C."/>
            <person name="Dos Santos P."/>
            <person name="Goldman B.S."/>
            <person name="Ertesvaag H."/>
            <person name="Espin G."/>
            <person name="Rubio L.M."/>
            <person name="Valla S."/>
            <person name="Almeida N.F."/>
            <person name="Balasubramanian D."/>
            <person name="Cromes L."/>
            <person name="Curatti L."/>
            <person name="Du Z."/>
            <person name="Godsy E."/>
            <person name="Goodner B."/>
            <person name="Hellner-Burris K."/>
            <person name="Hernandez J.A."/>
            <person name="Houmiel K."/>
            <person name="Imperial J."/>
            <person name="Kennedy C."/>
            <person name="Larson T.J."/>
            <person name="Latreille P."/>
            <person name="Ligon L.S."/>
            <person name="Lu J."/>
            <person name="Maerk M."/>
            <person name="Miller N.M."/>
            <person name="Norton S."/>
            <person name="O'Carroll I.P."/>
            <person name="Paulsen I."/>
            <person name="Raulfs E.C."/>
            <person name="Roemer R."/>
            <person name="Rosser J."/>
            <person name="Segura D."/>
            <person name="Slater S."/>
            <person name="Stricklin S.L."/>
            <person name="Studholme D.J."/>
            <person name="Sun J."/>
            <person name="Viana C.J."/>
            <person name="Wallin E."/>
            <person name="Wang B."/>
            <person name="Wheeler C."/>
            <person name="Zhu H."/>
            <person name="Dean D.R."/>
            <person name="Dixon R."/>
            <person name="Wood D."/>
        </authorList>
    </citation>
    <scope>NUCLEOTIDE SEQUENCE [LARGE SCALE GENOMIC DNA]</scope>
    <source>
        <strain>DJ / ATCC BAA-1303</strain>
    </source>
</reference>
<name>PGK_AZOVD</name>
<protein>
    <recommendedName>
        <fullName evidence="1">Phosphoglycerate kinase</fullName>
        <ecNumber evidence="1">2.7.2.3</ecNumber>
    </recommendedName>
</protein>
<keyword id="KW-0067">ATP-binding</keyword>
<keyword id="KW-0963">Cytoplasm</keyword>
<keyword id="KW-0324">Glycolysis</keyword>
<keyword id="KW-0418">Kinase</keyword>
<keyword id="KW-0547">Nucleotide-binding</keyword>
<keyword id="KW-0808">Transferase</keyword>
<accession>C1DKE9</accession>